<accession>Q49KU5</accession>
<feature type="chain" id="PRO_0000360252" description="NAD(P)H-quinone oxidoreductase subunit 6, chloroplastic">
    <location>
        <begin position="1"/>
        <end position="176"/>
    </location>
</feature>
<feature type="transmembrane region" description="Helical" evidence="2">
    <location>
        <begin position="10"/>
        <end position="30"/>
    </location>
</feature>
<feature type="transmembrane region" description="Helical" evidence="2">
    <location>
        <begin position="32"/>
        <end position="52"/>
    </location>
</feature>
<feature type="transmembrane region" description="Helical" evidence="2">
    <location>
        <begin position="61"/>
        <end position="81"/>
    </location>
</feature>
<feature type="transmembrane region" description="Helical" evidence="2">
    <location>
        <begin position="92"/>
        <end position="112"/>
    </location>
</feature>
<feature type="transmembrane region" description="Helical" evidence="2">
    <location>
        <begin position="152"/>
        <end position="172"/>
    </location>
</feature>
<protein>
    <recommendedName>
        <fullName>NAD(P)H-quinone oxidoreductase subunit 6, chloroplastic</fullName>
        <ecNumber>7.1.1.-</ecNumber>
    </recommendedName>
    <alternativeName>
        <fullName>NAD(P)H dehydrogenase subunit 6</fullName>
    </alternativeName>
    <alternativeName>
        <fullName>NADH-plastoquinone oxidoreductase subunit 6</fullName>
    </alternativeName>
</protein>
<comment type="function">
    <text evidence="1">NDH shuttles electrons from NAD(P)H:plastoquinone, via FMN and iron-sulfur (Fe-S) centers, to quinones in the photosynthetic chain and possibly in a chloroplast respiratory chain. The immediate electron acceptor for the enzyme in this species is believed to be plastoquinone. Couples the redox reaction to proton translocation, and thus conserves the redox energy in a proton gradient (By similarity).</text>
</comment>
<comment type="catalytic activity">
    <reaction>
        <text>a plastoquinone + NADH + (n+1) H(+)(in) = a plastoquinol + NAD(+) + n H(+)(out)</text>
        <dbReference type="Rhea" id="RHEA:42608"/>
        <dbReference type="Rhea" id="RHEA-COMP:9561"/>
        <dbReference type="Rhea" id="RHEA-COMP:9562"/>
        <dbReference type="ChEBI" id="CHEBI:15378"/>
        <dbReference type="ChEBI" id="CHEBI:17757"/>
        <dbReference type="ChEBI" id="CHEBI:57540"/>
        <dbReference type="ChEBI" id="CHEBI:57945"/>
        <dbReference type="ChEBI" id="CHEBI:62192"/>
    </reaction>
</comment>
<comment type="catalytic activity">
    <reaction>
        <text>a plastoquinone + NADPH + (n+1) H(+)(in) = a plastoquinol + NADP(+) + n H(+)(out)</text>
        <dbReference type="Rhea" id="RHEA:42612"/>
        <dbReference type="Rhea" id="RHEA-COMP:9561"/>
        <dbReference type="Rhea" id="RHEA-COMP:9562"/>
        <dbReference type="ChEBI" id="CHEBI:15378"/>
        <dbReference type="ChEBI" id="CHEBI:17757"/>
        <dbReference type="ChEBI" id="CHEBI:57783"/>
        <dbReference type="ChEBI" id="CHEBI:58349"/>
        <dbReference type="ChEBI" id="CHEBI:62192"/>
    </reaction>
</comment>
<comment type="subunit">
    <text evidence="1">NDH is composed of at least 16 different subunits, 5 of which are encoded in the nucleus.</text>
</comment>
<comment type="subcellular location">
    <subcellularLocation>
        <location evidence="1">Plastid</location>
        <location evidence="1">Chloroplast thylakoid membrane</location>
        <topology evidence="1">Multi-pass membrane protein</topology>
    </subcellularLocation>
</comment>
<comment type="similarity">
    <text evidence="3">Belongs to the complex I subunit 6 family.</text>
</comment>
<geneLocation type="chloroplast"/>
<reference key="1">
    <citation type="journal article" date="2005" name="DNA Res.">
        <title>Complete nucleotide sequence of the chloroplast genome from the Tasmanian blue gum, Eucalyptus globulus (Myrtaceae).</title>
        <authorList>
            <person name="Steane D.A."/>
        </authorList>
    </citation>
    <scope>NUCLEOTIDE SEQUENCE [LARGE SCALE GENOMIC DNA]</scope>
</reference>
<name>NU6C_EUCGG</name>
<evidence type="ECO:0000250" key="1"/>
<evidence type="ECO:0000255" key="2"/>
<evidence type="ECO:0000305" key="3"/>
<dbReference type="EC" id="7.1.1.-"/>
<dbReference type="EMBL" id="AY780259">
    <property type="protein sequence ID" value="AAX21081.1"/>
    <property type="molecule type" value="Genomic_DNA"/>
</dbReference>
<dbReference type="RefSeq" id="YP_636352.1">
    <property type="nucleotide sequence ID" value="NC_008115.1"/>
</dbReference>
<dbReference type="SMR" id="Q49KU5"/>
<dbReference type="GeneID" id="4108433"/>
<dbReference type="GO" id="GO:0009535">
    <property type="term" value="C:chloroplast thylakoid membrane"/>
    <property type="evidence" value="ECO:0007669"/>
    <property type="project" value="UniProtKB-SubCell"/>
</dbReference>
<dbReference type="GO" id="GO:0008137">
    <property type="term" value="F:NADH dehydrogenase (ubiquinone) activity"/>
    <property type="evidence" value="ECO:0007669"/>
    <property type="project" value="InterPro"/>
</dbReference>
<dbReference type="GO" id="GO:0048038">
    <property type="term" value="F:quinone binding"/>
    <property type="evidence" value="ECO:0007669"/>
    <property type="project" value="UniProtKB-KW"/>
</dbReference>
<dbReference type="FunFam" id="1.20.120.1200:FF:000002">
    <property type="entry name" value="NAD(P)H-quinone oxidoreductase subunit 6, chloroplastic"/>
    <property type="match status" value="1"/>
</dbReference>
<dbReference type="Gene3D" id="1.20.120.1200">
    <property type="entry name" value="NADH-ubiquinone/plastoquinone oxidoreductase chain 6, subunit NuoJ"/>
    <property type="match status" value="1"/>
</dbReference>
<dbReference type="InterPro" id="IPR050290">
    <property type="entry name" value="NAD(P)H-Q_Oxidoreduct_6"/>
</dbReference>
<dbReference type="InterPro" id="IPR001457">
    <property type="entry name" value="NADH_UbQ/plastoQ_OxRdtase_su6"/>
</dbReference>
<dbReference type="InterPro" id="IPR042106">
    <property type="entry name" value="Nuo/plastoQ_OxRdtase_6_NuoJ"/>
</dbReference>
<dbReference type="PANTHER" id="PTHR48479">
    <property type="entry name" value="NAD(P)H-QUINONE OXIDOREDUCTASE SUBUNIT 6, CHLOROPLASTIC"/>
    <property type="match status" value="1"/>
</dbReference>
<dbReference type="PANTHER" id="PTHR48479:SF1">
    <property type="entry name" value="NAD(P)H-QUINONE OXIDOREDUCTASE SUBUNIT 6, CHLOROPLASTIC"/>
    <property type="match status" value="1"/>
</dbReference>
<dbReference type="Pfam" id="PF00499">
    <property type="entry name" value="Oxidored_q3"/>
    <property type="match status" value="1"/>
</dbReference>
<keyword id="KW-0150">Chloroplast</keyword>
<keyword id="KW-0472">Membrane</keyword>
<keyword id="KW-0520">NAD</keyword>
<keyword id="KW-0521">NADP</keyword>
<keyword id="KW-0934">Plastid</keyword>
<keyword id="KW-0618">Plastoquinone</keyword>
<keyword id="KW-0874">Quinone</keyword>
<keyword id="KW-0793">Thylakoid</keyword>
<keyword id="KW-1278">Translocase</keyword>
<keyword id="KW-0812">Transmembrane</keyword>
<keyword id="KW-1133">Transmembrane helix</keyword>
<keyword id="KW-0813">Transport</keyword>
<gene>
    <name type="primary">ndhG</name>
</gene>
<proteinExistence type="inferred from homology"/>
<organism>
    <name type="scientific">Eucalyptus globulus subsp. globulus</name>
    <name type="common">Tasmanian blue gum</name>
    <dbReference type="NCBI Taxonomy" id="71271"/>
    <lineage>
        <taxon>Eukaryota</taxon>
        <taxon>Viridiplantae</taxon>
        <taxon>Streptophyta</taxon>
        <taxon>Embryophyta</taxon>
        <taxon>Tracheophyta</taxon>
        <taxon>Spermatophyta</taxon>
        <taxon>Magnoliopsida</taxon>
        <taxon>eudicotyledons</taxon>
        <taxon>Gunneridae</taxon>
        <taxon>Pentapetalae</taxon>
        <taxon>rosids</taxon>
        <taxon>malvids</taxon>
        <taxon>Myrtales</taxon>
        <taxon>Myrtaceae</taxon>
        <taxon>Myrtoideae</taxon>
        <taxon>Eucalypteae</taxon>
        <taxon>Eucalyptus</taxon>
    </lineage>
</organism>
<sequence length="176" mass="19158">MDLPGPIHDFLLVFLGSGLILGSLGVVLLTNPIYSAFSLGLVLVCISLFYILSNSHFVAAAQLLIYVGAINILILFAVMFMNGSEYYKDLNLWTVGDGITSLVCTSILVSLMTTILDTSWYGIIWTTKSNQIIEQDLIGNSQQIGIHLSTDFFLPFELISIILLVALIGAIAVARQ</sequence>